<organism>
    <name type="scientific">Chelativorans sp. (strain BNC1)</name>
    <dbReference type="NCBI Taxonomy" id="266779"/>
    <lineage>
        <taxon>Bacteria</taxon>
        <taxon>Pseudomonadati</taxon>
        <taxon>Pseudomonadota</taxon>
        <taxon>Alphaproteobacteria</taxon>
        <taxon>Hyphomicrobiales</taxon>
        <taxon>Phyllobacteriaceae</taxon>
        <taxon>Chelativorans</taxon>
    </lineage>
</organism>
<evidence type="ECO:0000255" key="1">
    <source>
        <dbReference type="HAMAP-Rule" id="MF_00120"/>
    </source>
</evidence>
<comment type="function">
    <text evidence="1">Allows the formation of correctly charged Gln-tRNA(Gln) through the transamidation of misacylated Glu-tRNA(Gln) in organisms which lack glutaminyl-tRNA synthetase. The reaction takes place in the presence of glutamine and ATP through an activated gamma-phospho-Glu-tRNA(Gln).</text>
</comment>
<comment type="catalytic activity">
    <reaction evidence="1">
        <text>L-glutamyl-tRNA(Gln) + L-glutamine + ATP + H2O = L-glutaminyl-tRNA(Gln) + L-glutamate + ADP + phosphate + H(+)</text>
        <dbReference type="Rhea" id="RHEA:17521"/>
        <dbReference type="Rhea" id="RHEA-COMP:9681"/>
        <dbReference type="Rhea" id="RHEA-COMP:9684"/>
        <dbReference type="ChEBI" id="CHEBI:15377"/>
        <dbReference type="ChEBI" id="CHEBI:15378"/>
        <dbReference type="ChEBI" id="CHEBI:29985"/>
        <dbReference type="ChEBI" id="CHEBI:30616"/>
        <dbReference type="ChEBI" id="CHEBI:43474"/>
        <dbReference type="ChEBI" id="CHEBI:58359"/>
        <dbReference type="ChEBI" id="CHEBI:78520"/>
        <dbReference type="ChEBI" id="CHEBI:78521"/>
        <dbReference type="ChEBI" id="CHEBI:456216"/>
        <dbReference type="EC" id="6.3.5.7"/>
    </reaction>
</comment>
<comment type="subunit">
    <text evidence="1">Heterotrimer of A, B and C subunits.</text>
</comment>
<comment type="similarity">
    <text evidence="1">Belongs to the amidase family. GatA subfamily.</text>
</comment>
<keyword id="KW-0067">ATP-binding</keyword>
<keyword id="KW-0436">Ligase</keyword>
<keyword id="KW-0547">Nucleotide-binding</keyword>
<keyword id="KW-0648">Protein biosynthesis</keyword>
<sequence length="493" mass="53373">MTELTKLTISEIRAKLADKEFTALELTEAYLSAIQTANEKLNAYITVTADKAREMAKASDMRLMQGGARPLEGVPLGIKDLFATEGVHTQACSHILDAFKPRYESTVTTNLWADGAVMLGKLNMDEFAMGSSNETSYYGPVVNPWREEGGNKDLVPGGSSGGSAAAVAAWLCAGATATDTGGSIRQPAAFTATVGIKPTYGRCSRWGIVAFASSLDQAGPIARDVRDAAILLKSMASVDPKDTTSIDIPVPDYEAAIGQSVKGLKIGIPKEYRVEGMPAEIEALWHKGIEWMRDAGAEIVDISLPHTKYALPAYYIVAPAEASSNLARYDGVRYGLRVPGRDITEMYENSRAAGFGREVKRRIMIGTYVLSAGYYDAYYLRAQRVRTLIKRDFEQAFEAGVDAILTPATPSAAFGIADQEMNADPVKMYLNDIFTVTVNMAGLPGIAVPAGLDSRGLPLGLQLIGRAFDEETLFRTAHIIEQAAGKFEPKRWW</sequence>
<feature type="chain" id="PRO_1000015858" description="Glutamyl-tRNA(Gln) amidotransferase subunit A">
    <location>
        <begin position="1"/>
        <end position="493"/>
    </location>
</feature>
<feature type="active site" description="Charge relay system" evidence="1">
    <location>
        <position position="79"/>
    </location>
</feature>
<feature type="active site" description="Charge relay system" evidence="1">
    <location>
        <position position="159"/>
    </location>
</feature>
<feature type="active site" description="Acyl-ester intermediate" evidence="1">
    <location>
        <position position="183"/>
    </location>
</feature>
<accession>Q11IL4</accession>
<reference key="1">
    <citation type="submission" date="2006-06" db="EMBL/GenBank/DDBJ databases">
        <title>Complete sequence of chromosome of Mesorhizobium sp. BNC1.</title>
        <authorList>
            <consortium name="US DOE Joint Genome Institute"/>
            <person name="Copeland A."/>
            <person name="Lucas S."/>
            <person name="Lapidus A."/>
            <person name="Barry K."/>
            <person name="Detter J.C."/>
            <person name="Glavina del Rio T."/>
            <person name="Hammon N."/>
            <person name="Israni S."/>
            <person name="Dalin E."/>
            <person name="Tice H."/>
            <person name="Pitluck S."/>
            <person name="Chertkov O."/>
            <person name="Brettin T."/>
            <person name="Bruce D."/>
            <person name="Han C."/>
            <person name="Tapia R."/>
            <person name="Gilna P."/>
            <person name="Schmutz J."/>
            <person name="Larimer F."/>
            <person name="Land M."/>
            <person name="Hauser L."/>
            <person name="Kyrpides N."/>
            <person name="Mikhailova N."/>
            <person name="Richardson P."/>
        </authorList>
    </citation>
    <scope>NUCLEOTIDE SEQUENCE [LARGE SCALE GENOMIC DNA]</scope>
    <source>
        <strain>BNC1</strain>
    </source>
</reference>
<gene>
    <name evidence="1" type="primary">gatA</name>
    <name type="ordered locus">Meso_1365</name>
</gene>
<proteinExistence type="inferred from homology"/>
<name>GATA_CHESB</name>
<dbReference type="EC" id="6.3.5.7" evidence="1"/>
<dbReference type="EMBL" id="CP000390">
    <property type="protein sequence ID" value="ABG62761.1"/>
    <property type="molecule type" value="Genomic_DNA"/>
</dbReference>
<dbReference type="SMR" id="Q11IL4"/>
<dbReference type="STRING" id="266779.Meso_1365"/>
<dbReference type="KEGG" id="mes:Meso_1365"/>
<dbReference type="eggNOG" id="COG0154">
    <property type="taxonomic scope" value="Bacteria"/>
</dbReference>
<dbReference type="HOGENOM" id="CLU_009600_0_3_5"/>
<dbReference type="OrthoDB" id="9811471at2"/>
<dbReference type="GO" id="GO:0030956">
    <property type="term" value="C:glutamyl-tRNA(Gln) amidotransferase complex"/>
    <property type="evidence" value="ECO:0007669"/>
    <property type="project" value="InterPro"/>
</dbReference>
<dbReference type="GO" id="GO:0005524">
    <property type="term" value="F:ATP binding"/>
    <property type="evidence" value="ECO:0007669"/>
    <property type="project" value="UniProtKB-KW"/>
</dbReference>
<dbReference type="GO" id="GO:0050567">
    <property type="term" value="F:glutaminyl-tRNA synthase (glutamine-hydrolyzing) activity"/>
    <property type="evidence" value="ECO:0007669"/>
    <property type="project" value="UniProtKB-UniRule"/>
</dbReference>
<dbReference type="GO" id="GO:0006412">
    <property type="term" value="P:translation"/>
    <property type="evidence" value="ECO:0007669"/>
    <property type="project" value="UniProtKB-UniRule"/>
</dbReference>
<dbReference type="Gene3D" id="3.90.1300.10">
    <property type="entry name" value="Amidase signature (AS) domain"/>
    <property type="match status" value="1"/>
</dbReference>
<dbReference type="HAMAP" id="MF_00120">
    <property type="entry name" value="GatA"/>
    <property type="match status" value="1"/>
</dbReference>
<dbReference type="InterPro" id="IPR000120">
    <property type="entry name" value="Amidase"/>
</dbReference>
<dbReference type="InterPro" id="IPR020556">
    <property type="entry name" value="Amidase_CS"/>
</dbReference>
<dbReference type="InterPro" id="IPR023631">
    <property type="entry name" value="Amidase_dom"/>
</dbReference>
<dbReference type="InterPro" id="IPR036928">
    <property type="entry name" value="AS_sf"/>
</dbReference>
<dbReference type="InterPro" id="IPR004412">
    <property type="entry name" value="GatA"/>
</dbReference>
<dbReference type="NCBIfam" id="TIGR00132">
    <property type="entry name" value="gatA"/>
    <property type="match status" value="1"/>
</dbReference>
<dbReference type="PANTHER" id="PTHR11895:SF151">
    <property type="entry name" value="GLUTAMYL-TRNA(GLN) AMIDOTRANSFERASE SUBUNIT A"/>
    <property type="match status" value="1"/>
</dbReference>
<dbReference type="PANTHER" id="PTHR11895">
    <property type="entry name" value="TRANSAMIDASE"/>
    <property type="match status" value="1"/>
</dbReference>
<dbReference type="Pfam" id="PF01425">
    <property type="entry name" value="Amidase"/>
    <property type="match status" value="1"/>
</dbReference>
<dbReference type="SUPFAM" id="SSF75304">
    <property type="entry name" value="Amidase signature (AS) enzymes"/>
    <property type="match status" value="1"/>
</dbReference>
<dbReference type="PROSITE" id="PS00571">
    <property type="entry name" value="AMIDASES"/>
    <property type="match status" value="1"/>
</dbReference>
<protein>
    <recommendedName>
        <fullName evidence="1">Glutamyl-tRNA(Gln) amidotransferase subunit A</fullName>
        <shortName evidence="1">Glu-ADT subunit A</shortName>
        <ecNumber evidence="1">6.3.5.7</ecNumber>
    </recommendedName>
</protein>